<sequence length="146" mass="16323">MKFHLLLVCVAISLGPIPQSEAGVTEEQMWSAGKLMRDVCLPKYPKVSVEVADNIRNGDIPNSKDTNCYINCILEMMQAIKKGKFQLESTLKQMDIMLPDSYKDEYRKGINLCKDSTVGLKNAPNCDPAHALLSCLKNNIKVFVFP</sequence>
<name>OB19A_DROME</name>
<protein>
    <recommendedName>
        <fullName>General odorant-binding protein 19a</fullName>
    </recommendedName>
</protein>
<gene>
    <name type="primary">Obp19a</name>
    <name type="ORF">CG11748</name>
</gene>
<comment type="function">
    <text evidence="1">Present in the aqueous fluid surrounding olfactory sensory dendrites and are thought to aid in the capture and transport of hydrophobic odorants into and through this fluid.</text>
</comment>
<comment type="subcellular location">
    <subcellularLocation>
        <location evidence="1">Secreted</location>
    </subcellularLocation>
</comment>
<comment type="tissue specificity">
    <text evidence="3">Expressed in adult olfactory system. Expressed exclusively in a subset of chemosensory sensilla on the third antennal segment.</text>
</comment>
<comment type="similarity">
    <text evidence="4">Belongs to the PBP/GOBP family.</text>
</comment>
<comment type="sequence caution" evidence="4">
    <conflict type="erroneous initiation">
        <sequence resource="EMBL-CDS" id="ACX30026"/>
    </conflict>
    <text>Extended N-terminus.</text>
</comment>
<comment type="sequence caution" evidence="4">
    <conflict type="frameshift">
        <sequence resource="EMBL-CDS" id="ACX30026"/>
    </conflict>
</comment>
<comment type="sequence caution" evidence="4">
    <conflict type="erroneous initiation">
        <sequence resource="EMBL-CDS" id="AEM72515"/>
    </conflict>
    <text>Extended N-terminus.</text>
</comment>
<organism>
    <name type="scientific">Drosophila melanogaster</name>
    <name type="common">Fruit fly</name>
    <dbReference type="NCBI Taxonomy" id="7227"/>
    <lineage>
        <taxon>Eukaryota</taxon>
        <taxon>Metazoa</taxon>
        <taxon>Ecdysozoa</taxon>
        <taxon>Arthropoda</taxon>
        <taxon>Hexapoda</taxon>
        <taxon>Insecta</taxon>
        <taxon>Pterygota</taxon>
        <taxon>Neoptera</taxon>
        <taxon>Endopterygota</taxon>
        <taxon>Diptera</taxon>
        <taxon>Brachycera</taxon>
        <taxon>Muscomorpha</taxon>
        <taxon>Ephydroidea</taxon>
        <taxon>Drosophilidae</taxon>
        <taxon>Drosophila</taxon>
        <taxon>Sophophora</taxon>
    </lineage>
</organism>
<keyword id="KW-1015">Disulfide bond</keyword>
<keyword id="KW-0552">Olfaction</keyword>
<keyword id="KW-1185">Reference proteome</keyword>
<keyword id="KW-0964">Secreted</keyword>
<keyword id="KW-0716">Sensory transduction</keyword>
<keyword id="KW-0732">Signal</keyword>
<keyword id="KW-0813">Transport</keyword>
<reference key="1">
    <citation type="journal article" date="2000" name="Science">
        <title>The genome sequence of Drosophila melanogaster.</title>
        <authorList>
            <person name="Adams M.D."/>
            <person name="Celniker S.E."/>
            <person name="Holt R.A."/>
            <person name="Evans C.A."/>
            <person name="Gocayne J.D."/>
            <person name="Amanatides P.G."/>
            <person name="Scherer S.E."/>
            <person name="Li P.W."/>
            <person name="Hoskins R.A."/>
            <person name="Galle R.F."/>
            <person name="George R.A."/>
            <person name="Lewis S.E."/>
            <person name="Richards S."/>
            <person name="Ashburner M."/>
            <person name="Henderson S.N."/>
            <person name="Sutton G.G."/>
            <person name="Wortman J.R."/>
            <person name="Yandell M.D."/>
            <person name="Zhang Q."/>
            <person name="Chen L.X."/>
            <person name="Brandon R.C."/>
            <person name="Rogers Y.-H.C."/>
            <person name="Blazej R.G."/>
            <person name="Champe M."/>
            <person name="Pfeiffer B.D."/>
            <person name="Wan K.H."/>
            <person name="Doyle C."/>
            <person name="Baxter E.G."/>
            <person name="Helt G."/>
            <person name="Nelson C.R."/>
            <person name="Miklos G.L.G."/>
            <person name="Abril J.F."/>
            <person name="Agbayani A."/>
            <person name="An H.-J."/>
            <person name="Andrews-Pfannkoch C."/>
            <person name="Baldwin D."/>
            <person name="Ballew R.M."/>
            <person name="Basu A."/>
            <person name="Baxendale J."/>
            <person name="Bayraktaroglu L."/>
            <person name="Beasley E.M."/>
            <person name="Beeson K.Y."/>
            <person name="Benos P.V."/>
            <person name="Berman B.P."/>
            <person name="Bhandari D."/>
            <person name="Bolshakov S."/>
            <person name="Borkova D."/>
            <person name="Botchan M.R."/>
            <person name="Bouck J."/>
            <person name="Brokstein P."/>
            <person name="Brottier P."/>
            <person name="Burtis K.C."/>
            <person name="Busam D.A."/>
            <person name="Butler H."/>
            <person name="Cadieu E."/>
            <person name="Center A."/>
            <person name="Chandra I."/>
            <person name="Cherry J.M."/>
            <person name="Cawley S."/>
            <person name="Dahlke C."/>
            <person name="Davenport L.B."/>
            <person name="Davies P."/>
            <person name="de Pablos B."/>
            <person name="Delcher A."/>
            <person name="Deng Z."/>
            <person name="Mays A.D."/>
            <person name="Dew I."/>
            <person name="Dietz S.M."/>
            <person name="Dodson K."/>
            <person name="Doup L.E."/>
            <person name="Downes M."/>
            <person name="Dugan-Rocha S."/>
            <person name="Dunkov B.C."/>
            <person name="Dunn P."/>
            <person name="Durbin K.J."/>
            <person name="Evangelista C.C."/>
            <person name="Ferraz C."/>
            <person name="Ferriera S."/>
            <person name="Fleischmann W."/>
            <person name="Fosler C."/>
            <person name="Gabrielian A.E."/>
            <person name="Garg N.S."/>
            <person name="Gelbart W.M."/>
            <person name="Glasser K."/>
            <person name="Glodek A."/>
            <person name="Gong F."/>
            <person name="Gorrell J.H."/>
            <person name="Gu Z."/>
            <person name="Guan P."/>
            <person name="Harris M."/>
            <person name="Harris N.L."/>
            <person name="Harvey D.A."/>
            <person name="Heiman T.J."/>
            <person name="Hernandez J.R."/>
            <person name="Houck J."/>
            <person name="Hostin D."/>
            <person name="Houston K.A."/>
            <person name="Howland T.J."/>
            <person name="Wei M.-H."/>
            <person name="Ibegwam C."/>
            <person name="Jalali M."/>
            <person name="Kalush F."/>
            <person name="Karpen G.H."/>
            <person name="Ke Z."/>
            <person name="Kennison J.A."/>
            <person name="Ketchum K.A."/>
            <person name="Kimmel B.E."/>
            <person name="Kodira C.D."/>
            <person name="Kraft C.L."/>
            <person name="Kravitz S."/>
            <person name="Kulp D."/>
            <person name="Lai Z."/>
            <person name="Lasko P."/>
            <person name="Lei Y."/>
            <person name="Levitsky A.A."/>
            <person name="Li J.H."/>
            <person name="Li Z."/>
            <person name="Liang Y."/>
            <person name="Lin X."/>
            <person name="Liu X."/>
            <person name="Mattei B."/>
            <person name="McIntosh T.C."/>
            <person name="McLeod M.P."/>
            <person name="McPherson D."/>
            <person name="Merkulov G."/>
            <person name="Milshina N.V."/>
            <person name="Mobarry C."/>
            <person name="Morris J."/>
            <person name="Moshrefi A."/>
            <person name="Mount S.M."/>
            <person name="Moy M."/>
            <person name="Murphy B."/>
            <person name="Murphy L."/>
            <person name="Muzny D.M."/>
            <person name="Nelson D.L."/>
            <person name="Nelson D.R."/>
            <person name="Nelson K.A."/>
            <person name="Nixon K."/>
            <person name="Nusskern D.R."/>
            <person name="Pacleb J.M."/>
            <person name="Palazzolo M."/>
            <person name="Pittman G.S."/>
            <person name="Pan S."/>
            <person name="Pollard J."/>
            <person name="Puri V."/>
            <person name="Reese M.G."/>
            <person name="Reinert K."/>
            <person name="Remington K."/>
            <person name="Saunders R.D.C."/>
            <person name="Scheeler F."/>
            <person name="Shen H."/>
            <person name="Shue B.C."/>
            <person name="Siden-Kiamos I."/>
            <person name="Simpson M."/>
            <person name="Skupski M.P."/>
            <person name="Smith T.J."/>
            <person name="Spier E."/>
            <person name="Spradling A.C."/>
            <person name="Stapleton M."/>
            <person name="Strong R."/>
            <person name="Sun E."/>
            <person name="Svirskas R."/>
            <person name="Tector C."/>
            <person name="Turner R."/>
            <person name="Venter E."/>
            <person name="Wang A.H."/>
            <person name="Wang X."/>
            <person name="Wang Z.-Y."/>
            <person name="Wassarman D.A."/>
            <person name="Weinstock G.M."/>
            <person name="Weissenbach J."/>
            <person name="Williams S.M."/>
            <person name="Woodage T."/>
            <person name="Worley K.C."/>
            <person name="Wu D."/>
            <person name="Yang S."/>
            <person name="Yao Q.A."/>
            <person name="Ye J."/>
            <person name="Yeh R.-F."/>
            <person name="Zaveri J.S."/>
            <person name="Zhan M."/>
            <person name="Zhang G."/>
            <person name="Zhao Q."/>
            <person name="Zheng L."/>
            <person name="Zheng X.H."/>
            <person name="Zhong F.N."/>
            <person name="Zhong W."/>
            <person name="Zhou X."/>
            <person name="Zhu S.C."/>
            <person name="Zhu X."/>
            <person name="Smith H.O."/>
            <person name="Gibbs R.A."/>
            <person name="Myers E.W."/>
            <person name="Rubin G.M."/>
            <person name="Venter J.C."/>
        </authorList>
    </citation>
    <scope>NUCLEOTIDE SEQUENCE [LARGE SCALE GENOMIC DNA]</scope>
    <source>
        <strain>Berkeley</strain>
    </source>
</reference>
<reference key="2">
    <citation type="journal article" date="2002" name="Genome Biol.">
        <title>Annotation of the Drosophila melanogaster euchromatic genome: a systematic review.</title>
        <authorList>
            <person name="Misra S."/>
            <person name="Crosby M.A."/>
            <person name="Mungall C.J."/>
            <person name="Matthews B.B."/>
            <person name="Campbell K.S."/>
            <person name="Hradecky P."/>
            <person name="Huang Y."/>
            <person name="Kaminker J.S."/>
            <person name="Millburn G.H."/>
            <person name="Prochnik S.E."/>
            <person name="Smith C.D."/>
            <person name="Tupy J.L."/>
            <person name="Whitfield E.J."/>
            <person name="Bayraktaroglu L."/>
            <person name="Berman B.P."/>
            <person name="Bettencourt B.R."/>
            <person name="Celniker S.E."/>
            <person name="de Grey A.D.N.J."/>
            <person name="Drysdale R.A."/>
            <person name="Harris N.L."/>
            <person name="Richter J."/>
            <person name="Russo S."/>
            <person name="Schroeder A.J."/>
            <person name="Shu S.Q."/>
            <person name="Stapleton M."/>
            <person name="Yamada C."/>
            <person name="Ashburner M."/>
            <person name="Gelbart W.M."/>
            <person name="Rubin G.M."/>
            <person name="Lewis S.E."/>
        </authorList>
    </citation>
    <scope>GENOME REANNOTATION</scope>
    <source>
        <strain>Berkeley</strain>
    </source>
</reference>
<reference key="3">
    <citation type="submission" date="2011-08" db="EMBL/GenBank/DDBJ databases">
        <authorList>
            <person name="Carlson J."/>
            <person name="Booth B."/>
            <person name="Frise E."/>
            <person name="Sandler J."/>
            <person name="Wan K."/>
            <person name="Yu C."/>
            <person name="Celniker S."/>
        </authorList>
    </citation>
    <scope>NUCLEOTIDE SEQUENCE [LARGE SCALE MRNA]</scope>
</reference>
<reference key="4">
    <citation type="journal article" date="2001" name="Genetics">
        <title>A large family of divergent Drosophila odorant-binding proteins expressed in gustatory and olfactory sensilla.</title>
        <authorList>
            <person name="Galindo K."/>
            <person name="Smith D.P."/>
        </authorList>
    </citation>
    <scope>IDENTIFICATION</scope>
    <scope>TISSUE SPECIFICITY</scope>
</reference>
<feature type="signal peptide" evidence="2">
    <location>
        <begin position="1"/>
        <end position="22"/>
    </location>
</feature>
<feature type="chain" id="PRO_0000012568" description="General odorant-binding protein 19a">
    <location>
        <begin position="23"/>
        <end position="146"/>
    </location>
</feature>
<feature type="disulfide bond" evidence="1">
    <location>
        <begin position="40"/>
        <end position="72"/>
    </location>
</feature>
<feature type="disulfide bond" evidence="1">
    <location>
        <begin position="68"/>
        <end position="126"/>
    </location>
</feature>
<feature type="disulfide bond" evidence="1">
    <location>
        <begin position="113"/>
        <end position="135"/>
    </location>
</feature>
<accession>Q9VR94</accession>
<accession>C9QNY2</accession>
<accession>G2J5W2</accession>
<accession>Q8IQ33</accession>
<dbReference type="EMBL" id="AE014298">
    <property type="protein sequence ID" value="AAF50910.2"/>
    <property type="molecule type" value="Genomic_DNA"/>
</dbReference>
<dbReference type="EMBL" id="BT099864">
    <property type="protein sequence ID" value="ACX30026.1"/>
    <property type="status" value="ALT_SEQ"/>
    <property type="molecule type" value="mRNA"/>
</dbReference>
<dbReference type="EMBL" id="BT128819">
    <property type="protein sequence ID" value="AEM72515.1"/>
    <property type="status" value="ALT_INIT"/>
    <property type="molecule type" value="mRNA"/>
</dbReference>
<dbReference type="RefSeq" id="NP_728338.2">
    <property type="nucleotide sequence ID" value="NM_167700.3"/>
</dbReference>
<dbReference type="SMR" id="Q9VR94"/>
<dbReference type="FunCoup" id="Q9VR94">
    <property type="interactions" value="44"/>
</dbReference>
<dbReference type="STRING" id="7227.FBpp0297995"/>
<dbReference type="PaxDb" id="7227-FBpp0297995"/>
<dbReference type="EnsemblMetazoa" id="FBtr0307166">
    <property type="protein sequence ID" value="FBpp0297995"/>
    <property type="gene ID" value="FBgn0031109"/>
</dbReference>
<dbReference type="GeneID" id="33037"/>
<dbReference type="KEGG" id="dme:Dmel_CG11748"/>
<dbReference type="AGR" id="FB:FBgn0031109"/>
<dbReference type="CTD" id="33037"/>
<dbReference type="FlyBase" id="FBgn0031109">
    <property type="gene designation" value="Obp19a"/>
</dbReference>
<dbReference type="VEuPathDB" id="VectorBase:FBgn0031109"/>
<dbReference type="eggNOG" id="ENOG502SA47">
    <property type="taxonomic scope" value="Eukaryota"/>
</dbReference>
<dbReference type="GeneTree" id="ENSGT00940000176403"/>
<dbReference type="HOGENOM" id="CLU_107288_0_0_1"/>
<dbReference type="InParanoid" id="Q9VR94"/>
<dbReference type="OMA" id="EQMWAAG"/>
<dbReference type="OrthoDB" id="6610259at2759"/>
<dbReference type="PhylomeDB" id="Q9VR94"/>
<dbReference type="BioGRID-ORCS" id="33037">
    <property type="hits" value="0 hits in 1 CRISPR screen"/>
</dbReference>
<dbReference type="GenomeRNAi" id="33037"/>
<dbReference type="PRO" id="PR:Q9VR94"/>
<dbReference type="Proteomes" id="UP000000803">
    <property type="component" value="Chromosome X"/>
</dbReference>
<dbReference type="Bgee" id="FBgn0031109">
    <property type="expression patterns" value="Expressed in adult olfactory receptor neuron Ir75d in antenna and 51 other cell types or tissues"/>
</dbReference>
<dbReference type="ExpressionAtlas" id="Q9VR94">
    <property type="expression patterns" value="baseline and differential"/>
</dbReference>
<dbReference type="GO" id="GO:0005576">
    <property type="term" value="C:extracellular region"/>
    <property type="evidence" value="ECO:0000250"/>
    <property type="project" value="UniProtKB"/>
</dbReference>
<dbReference type="GO" id="GO:0035275">
    <property type="term" value="F:dibutyl phthalate binding"/>
    <property type="evidence" value="ECO:0000318"/>
    <property type="project" value="GO_Central"/>
</dbReference>
<dbReference type="GO" id="GO:0005549">
    <property type="term" value="F:odorant binding"/>
    <property type="evidence" value="ECO:0000250"/>
    <property type="project" value="FlyBase"/>
</dbReference>
<dbReference type="GO" id="GO:0042048">
    <property type="term" value="P:olfactory behavior"/>
    <property type="evidence" value="ECO:0000250"/>
    <property type="project" value="UniProtKB"/>
</dbReference>
<dbReference type="GO" id="GO:0019236">
    <property type="term" value="P:response to pheromone"/>
    <property type="evidence" value="ECO:0000250"/>
    <property type="project" value="UniProtKB"/>
</dbReference>
<dbReference type="GO" id="GO:0007606">
    <property type="term" value="P:sensory perception of chemical stimulus"/>
    <property type="evidence" value="ECO:0000250"/>
    <property type="project" value="FlyBase"/>
</dbReference>
<dbReference type="GO" id="GO:0007608">
    <property type="term" value="P:sensory perception of smell"/>
    <property type="evidence" value="ECO:0000318"/>
    <property type="project" value="GO_Central"/>
</dbReference>
<dbReference type="CDD" id="cd23992">
    <property type="entry name" value="PBP_GOBP"/>
    <property type="match status" value="1"/>
</dbReference>
<dbReference type="FunFam" id="1.10.238.20:FF:000001">
    <property type="entry name" value="General odorant-binding protein lush"/>
    <property type="match status" value="1"/>
</dbReference>
<dbReference type="Gene3D" id="1.10.238.20">
    <property type="entry name" value="Pheromone/general odorant binding protein domain"/>
    <property type="match status" value="1"/>
</dbReference>
<dbReference type="InterPro" id="IPR006170">
    <property type="entry name" value="PBP/GOBP"/>
</dbReference>
<dbReference type="InterPro" id="IPR036728">
    <property type="entry name" value="PBP_GOBP_sf"/>
</dbReference>
<dbReference type="PANTHER" id="PTHR21364">
    <property type="entry name" value="GENERAL ODORANT-BINDING PROTEIN 19A"/>
    <property type="match status" value="1"/>
</dbReference>
<dbReference type="PANTHER" id="PTHR21364:SF2">
    <property type="entry name" value="GENERAL ODORANT-BINDING PROTEIN 19A"/>
    <property type="match status" value="1"/>
</dbReference>
<dbReference type="Pfam" id="PF01395">
    <property type="entry name" value="PBP_GOBP"/>
    <property type="match status" value="1"/>
</dbReference>
<dbReference type="SMART" id="SM00708">
    <property type="entry name" value="PhBP"/>
    <property type="match status" value="1"/>
</dbReference>
<dbReference type="SUPFAM" id="SSF47565">
    <property type="entry name" value="Insect pheromone/odorant-binding proteins"/>
    <property type="match status" value="1"/>
</dbReference>
<proteinExistence type="evidence at transcript level"/>
<evidence type="ECO:0000250" key="1"/>
<evidence type="ECO:0000255" key="2"/>
<evidence type="ECO:0000269" key="3">
    <source>
    </source>
</evidence>
<evidence type="ECO:0000305" key="4"/>